<accession>P55774</accession>
<accession>B5BUM2</accession>
<accession>Q53X71</accession>
<reference key="1">
    <citation type="patent" date="1996-04-02" number="US5504003">
        <title>Macrophage inflammatory protein-3 and -4.</title>
        <authorList>
            <person name="Li H."/>
            <person name="Ruben S."/>
        </authorList>
    </citation>
    <scope>NUCLEOTIDE SEQUENCE [MRNA]</scope>
</reference>
<reference key="2">
    <citation type="journal article" date="1997" name="J. Immunol.">
        <title>A novel human CC chemokine PARC that is most homologous to macrophage-inflammatory protein-1 alpha/LD78 alpha and chemotactic for T lymphocytes, but not for monocytes.</title>
        <authorList>
            <person name="Hieshima K."/>
            <person name="Imai T."/>
            <person name="Baba M."/>
            <person name="Shoudai K."/>
            <person name="Ishizuka K."/>
            <person name="Nakagawa T."/>
            <person name="Tsuruta J."/>
            <person name="Takeya M."/>
            <person name="Sakaki Y."/>
            <person name="Takatsuki K."/>
            <person name="Miura R."/>
            <person name="Opdenakker G."/>
            <person name="van Damme J."/>
            <person name="Yoshie O."/>
            <person name="Nomiyama H."/>
        </authorList>
    </citation>
    <scope>NUCLEOTIDE SEQUENCE [MRNA]</scope>
    <scope>PARTIAL PROTEIN SEQUENCE</scope>
    <source>
        <tissue>Aorta</tissue>
        <tissue>Lung</tissue>
    </source>
</reference>
<reference key="3">
    <citation type="journal article" date="1998" name="J. Immunol.">
        <title>Alternative macrophage activation-associated CC-chemokine-1, a novel structural homologue of macrophage inflammatory protein-1 alpha with a Th2-associated expression pattern.</title>
        <authorList>
            <person name="Kodelja V."/>
            <person name="Mueller C."/>
            <person name="Politz O."/>
            <person name="Hakij N."/>
            <person name="Orfanos C.E."/>
            <person name="Goerdt S."/>
        </authorList>
    </citation>
    <scope>NUCLEOTIDE SEQUENCE [MRNA]</scope>
</reference>
<reference key="4">
    <citation type="journal article" date="1997" name="Nature">
        <title>A dendritic-cell-derived C-C chemokine that preferentially attracts naive T cells.</title>
        <authorList>
            <person name="Adema G.J."/>
            <person name="Hartgers F."/>
            <person name="Verstraten R."/>
            <person name="de Vries E."/>
            <person name="Marland G."/>
            <person name="Menon S."/>
            <person name="Foster J."/>
            <person name="Xu Y."/>
            <person name="Nooyen P."/>
            <person name="McClanahan T."/>
            <person name="Bacon K.B."/>
            <person name="Figdor C.G."/>
        </authorList>
    </citation>
    <scope>NUCLEOTIDE SEQUENCE [MRNA]</scope>
    <scope>PROTEIN SEQUENCE OF N-TERMINUS</scope>
    <source>
        <tissue>Dendritic cell</tissue>
    </source>
</reference>
<reference key="5">
    <citation type="journal article" date="1999" name="Genomics">
        <title>Chemokine PARC gene (SCYA18) generated by fusion of two MIP-1alpha/LD78alpha-like genes.</title>
        <authorList>
            <person name="Tasaki Y."/>
            <person name="Fukuda S."/>
            <person name="Iio M."/>
            <person name="Miura R."/>
            <person name="Imai T."/>
            <person name="Sugano S."/>
            <person name="Yoshie O."/>
            <person name="Hughes A.L."/>
            <person name="Nomiyama H."/>
        </authorList>
    </citation>
    <scope>NUCLEOTIDE SEQUENCE [GENOMIC DNA]</scope>
</reference>
<reference key="6">
    <citation type="journal article" date="1999" name="Genomics">
        <title>Genomic organization and biological characterization of the novel human CC chemokine DC-CK-1/PARC/MIP-4/SCYA18.</title>
        <authorList>
            <person name="Guan P."/>
            <person name="Burghes A.H.M."/>
            <person name="Cunningham A."/>
            <person name="Lira P."/>
            <person name="Brissette W.H."/>
            <person name="Neote K."/>
            <person name="McColl S.R."/>
        </authorList>
    </citation>
    <scope>NUCLEOTIDE SEQUENCE [GENOMIC DNA]</scope>
    <scope>CHARACTERIZATION</scope>
</reference>
<reference key="7">
    <citation type="submission" date="1998-12" db="EMBL/GenBank/DDBJ databases">
        <title>The genomic locus for the AMAC-1 gene contains possible pseudo-exons within the first intron sequence.</title>
        <authorList>
            <person name="Politz O."/>
            <person name="Kodelja V."/>
            <person name="Guillot P."/>
            <person name="Orfanos C.E."/>
            <person name="Goerdt S."/>
        </authorList>
    </citation>
    <scope>NUCLEOTIDE SEQUENCE [GENOMIC DNA]</scope>
</reference>
<reference key="8">
    <citation type="submission" date="2004-05" db="EMBL/GenBank/DDBJ databases">
        <title>Cloning of human full open reading frames in Gateway(TM) system entry vector (pDONR201).</title>
        <authorList>
            <person name="Ebert L."/>
            <person name="Schick M."/>
            <person name="Neubert P."/>
            <person name="Schatten R."/>
            <person name="Henze S."/>
            <person name="Korn B."/>
        </authorList>
    </citation>
    <scope>NUCLEOTIDE SEQUENCE [LARGE SCALE MRNA]</scope>
</reference>
<reference key="9">
    <citation type="submission" date="2005-09" db="EMBL/GenBank/DDBJ databases">
        <authorList>
            <person name="Mural R.J."/>
            <person name="Istrail S."/>
            <person name="Sutton G.G."/>
            <person name="Florea L."/>
            <person name="Halpern A.L."/>
            <person name="Mobarry C.M."/>
            <person name="Lippert R."/>
            <person name="Walenz B."/>
            <person name="Shatkay H."/>
            <person name="Dew I."/>
            <person name="Miller J.R."/>
            <person name="Flanigan M.J."/>
            <person name="Edwards N.J."/>
            <person name="Bolanos R."/>
            <person name="Fasulo D."/>
            <person name="Halldorsson B.V."/>
            <person name="Hannenhalli S."/>
            <person name="Turner R."/>
            <person name="Yooseph S."/>
            <person name="Lu F."/>
            <person name="Nusskern D.R."/>
            <person name="Shue B.C."/>
            <person name="Zheng X.H."/>
            <person name="Zhong F."/>
            <person name="Delcher A.L."/>
            <person name="Huson D.H."/>
            <person name="Kravitz S.A."/>
            <person name="Mouchard L."/>
            <person name="Reinert K."/>
            <person name="Remington K.A."/>
            <person name="Clark A.G."/>
            <person name="Waterman M.S."/>
            <person name="Eichler E.E."/>
            <person name="Adams M.D."/>
            <person name="Hunkapiller M.W."/>
            <person name="Myers E.W."/>
            <person name="Venter J.C."/>
        </authorList>
    </citation>
    <scope>NUCLEOTIDE SEQUENCE [LARGE SCALE GENOMIC DNA]</scope>
</reference>
<reference key="10">
    <citation type="journal article" date="2008" name="Nat. Methods">
        <title>Human protein factory for converting the transcriptome into an in vitro-expressed proteome.</title>
        <authorList>
            <person name="Goshima N."/>
            <person name="Kawamura Y."/>
            <person name="Fukumoto A."/>
            <person name="Miura A."/>
            <person name="Honma R."/>
            <person name="Satoh R."/>
            <person name="Wakamatsu A."/>
            <person name="Yamamoto J."/>
            <person name="Kimura K."/>
            <person name="Nishikawa T."/>
            <person name="Andoh T."/>
            <person name="Iida Y."/>
            <person name="Ishikawa K."/>
            <person name="Ito E."/>
            <person name="Kagawa N."/>
            <person name="Kaminaga C."/>
            <person name="Kanehori K."/>
            <person name="Kawakami B."/>
            <person name="Kenmochi K."/>
            <person name="Kimura R."/>
            <person name="Kobayashi M."/>
            <person name="Kuroita T."/>
            <person name="Kuwayama H."/>
            <person name="Maruyama Y."/>
            <person name="Matsuo K."/>
            <person name="Minami K."/>
            <person name="Mitsubori M."/>
            <person name="Mori M."/>
            <person name="Morishita R."/>
            <person name="Murase A."/>
            <person name="Nishikawa A."/>
            <person name="Nishikawa S."/>
            <person name="Okamoto T."/>
            <person name="Sakagami N."/>
            <person name="Sakamoto Y."/>
            <person name="Sasaki Y."/>
            <person name="Seki T."/>
            <person name="Sono S."/>
            <person name="Sugiyama A."/>
            <person name="Sumiya T."/>
            <person name="Takayama T."/>
            <person name="Takayama Y."/>
            <person name="Takeda H."/>
            <person name="Togashi T."/>
            <person name="Yahata K."/>
            <person name="Yamada H."/>
            <person name="Yanagisawa Y."/>
            <person name="Endo Y."/>
            <person name="Imamoto F."/>
            <person name="Kisu Y."/>
            <person name="Tanaka S."/>
            <person name="Isogai T."/>
            <person name="Imai J."/>
            <person name="Watanabe S."/>
            <person name="Nomura N."/>
        </authorList>
    </citation>
    <scope>NUCLEOTIDE SEQUENCE [LARGE SCALE MRNA]</scope>
</reference>
<reference key="11">
    <citation type="journal article" date="2004" name="Genome Res.">
        <title>The status, quality, and expansion of the NIH full-length cDNA project: the Mammalian Gene Collection (MGC).</title>
        <authorList>
            <consortium name="The MGC Project Team"/>
        </authorList>
    </citation>
    <scope>NUCLEOTIDE SEQUENCE [LARGE SCALE MRNA]</scope>
</reference>
<reference key="12">
    <citation type="journal article" date="1997" name="J. Leukoc. Biol.">
        <title>The chemokine information source: identification and characterization of novel chemokines using the WorldWideWeb and expressed sequence tag databases.</title>
        <authorList>
            <person name="Wells T.N.C."/>
            <person name="Peitsch M.C."/>
        </authorList>
    </citation>
    <scope>DISCUSSION OF SEQUENCE</scope>
</reference>
<reference key="13">
    <citation type="journal article" date="2001" name="Eur. J. Immunol.">
        <title>Selective induction of CCL18/PARC by staphylococcal enterotoxins in mononuclear cells and enhanced levels in septic and rheumatoid arthritis.</title>
        <authorList>
            <person name="Schutyser E."/>
            <person name="Struyf S."/>
            <person name="Wuyts A."/>
            <person name="Put W."/>
            <person name="Geboes K."/>
            <person name="Grillet B."/>
            <person name="Opdenakker G."/>
            <person name="Van Damme J."/>
        </authorList>
    </citation>
    <scope>IDENTIFICATION OF CCL18(3-69) AND CCL18(4-69)</scope>
    <scope>PROTEOLYTIC PROCESSING OF N-TERMINAL</scope>
    <scope>FUNCTION</scope>
    <scope>MASS SPECTROMETRY</scope>
    <scope>TISSUE SPECIFICITY</scope>
    <scope>INDUCTION</scope>
</reference>
<reference key="14">
    <citation type="journal article" date="2002" name="J. Biol. Chem.">
        <title>Identification of biologically active chemokine isoforms from ascitic fluid and elevated levels of CCL18/pulmonary and activation-regulated chemokine in ovarian carcinoma.</title>
        <authorList>
            <person name="Schutyser E."/>
            <person name="Struyf S."/>
            <person name="Proost P."/>
            <person name="Opdenakker G."/>
            <person name="Laureys G."/>
            <person name="Verhasselt B."/>
            <person name="Peperstraete L."/>
            <person name="Van de Putte I."/>
            <person name="Saccani A."/>
            <person name="Allavena P."/>
            <person name="Mantovani A."/>
            <person name="Van Damme J."/>
        </authorList>
    </citation>
    <scope>IDENTIFICATION OF CCL18(1-68)</scope>
    <scope>PROTEOLYTIC PROCESSING OF C-TERMINAL</scope>
    <scope>FUNCTION</scope>
</reference>
<reference key="15">
    <citation type="journal article" date="2013" name="Cytokine">
        <title>The disulfide bond between cysteine 10 and cysteine 34 is required for CCL18 activity.</title>
        <authorList>
            <person name="Legendre B."/>
            <person name="Tokarski C."/>
            <person name="Chang Y."/>
            <person name="De Freitas Caires N."/>
            <person name="Lortat-Jacob H."/>
            <person name="Nadai P.D."/>
            <person name="Rolando C."/>
            <person name="Duez C."/>
            <person name="Tsicopoulos A."/>
            <person name="Lassalle P."/>
        </authorList>
    </citation>
    <scope>DISULFIDE BONDS</scope>
</reference>
<sequence>MKGLAAALLVLVCTMALCSCAQVGTNKELCCLVYTSWQIPQKFIVDYSETSPQCPKPGVILLTKRGRQICADPNKKWVQKYISDLKLNA</sequence>
<comment type="function">
    <text evidence="1 2">Chemotactic factor that attracts lymphocytes but not monocytes or granulocytes. May be involved in B-cell migration into B-cell follicles in lymph nodes. Attracts naive T-lymphocytes toward dendritic cells and activated macrophages in lymph nodes, has chemotactic activity for naive T-cells, CD4+ and CD8+ T-cells and thus may play a role in both humoral and cell-mediated immunity responses.</text>
</comment>
<comment type="interaction">
    <interactant intactId="EBI-711240">
        <id>P55774</id>
    </interactant>
    <interactant intactId="EBI-2815766">
        <id>Q9BZ71</id>
        <label>PITPNM3</label>
    </interactant>
    <organismsDiffer>false</organismsDiffer>
    <experiments>4</experiments>
</comment>
<comment type="subcellular location">
    <subcellularLocation>
        <location>Secreted</location>
    </subcellularLocation>
</comment>
<comment type="tissue specificity">
    <text evidence="1">Expressed at high levels in lung, lymph nodes, placenta, bone marrow, dendritic cells present in germinal centers and T-cell areas of secondary lymphoid organs and macrophages derived from peripheral blood monocytes. Not expressed by peripheral blood monocytes and a monocyte-to-macrophage differentiation is a prerequisite for expression. Expressed in synovial fluids from patients with rheumatoid and septic arthritis and in ovarian carcinoma ascitic fluid.</text>
</comment>
<comment type="induction">
    <text evidence="1">Specifically induced in macrophages by IL4/interleukin-4, IL13/interleukin-13, and IL10/interleukin-10. Expression is inhibited by IFNG/IFN-gamma while glucocorticoids exert a slightly positive synergistic effect in combination with IL4/interleukin-4. Strongly induced in several human cell lines, including monocytic U-937 cells, by phorbol myristate acetate (PMA). Induced in PBMC by staphylococcal enterotoxins SEA and SEB.</text>
</comment>
<comment type="PTM">
    <text>The Cys-30/Cys-54 disulfide bond is required for activity.</text>
</comment>
<comment type="mass spectrometry">
    <molecule>C-C motif chemokine 18</molecule>
</comment>
<comment type="mass spectrometry">
    <molecule>CCL18(3-69)</molecule>
</comment>
<comment type="mass spectrometry">
    <molecule>CCL18(4-69)</molecule>
</comment>
<comment type="similarity">
    <text evidence="5">Belongs to the intercrine beta (chemokine CC) family.</text>
</comment>
<comment type="online information" name="Wikipedia">
    <link uri="https://en.wikipedia.org/wiki/CCL18"/>
    <text>CCL18 entry</text>
</comment>
<proteinExistence type="evidence at protein level"/>
<name>CCL18_HUMAN</name>
<keyword id="KW-0002">3D-structure</keyword>
<keyword id="KW-0145">Chemotaxis</keyword>
<keyword id="KW-0202">Cytokine</keyword>
<keyword id="KW-0903">Direct protein sequencing</keyword>
<keyword id="KW-1015">Disulfide bond</keyword>
<keyword id="KW-0395">Inflammatory response</keyword>
<keyword id="KW-1267">Proteomics identification</keyword>
<keyword id="KW-1185">Reference proteome</keyword>
<keyword id="KW-0964">Secreted</keyword>
<keyword id="KW-0732">Signal</keyword>
<dbReference type="EMBL" id="AB000221">
    <property type="protein sequence ID" value="BAA21670.1"/>
    <property type="molecule type" value="mRNA"/>
</dbReference>
<dbReference type="EMBL" id="Y13710">
    <property type="protein sequence ID" value="CAA74039.1"/>
    <property type="molecule type" value="mRNA"/>
</dbReference>
<dbReference type="EMBL" id="AB012113">
    <property type="protein sequence ID" value="BAA34368.1"/>
    <property type="molecule type" value="Genomic_DNA"/>
</dbReference>
<dbReference type="EMBL" id="AF082214">
    <property type="protein sequence ID" value="AAC32287.1"/>
    <property type="molecule type" value="Genomic_DNA"/>
</dbReference>
<dbReference type="EMBL" id="AF082212">
    <property type="protein sequence ID" value="AAC32287.1"/>
    <property type="status" value="JOINED"/>
    <property type="molecule type" value="Genomic_DNA"/>
</dbReference>
<dbReference type="EMBL" id="AF082213">
    <property type="protein sequence ID" value="AAC32287.1"/>
    <property type="status" value="JOINED"/>
    <property type="molecule type" value="Genomic_DNA"/>
</dbReference>
<dbReference type="EMBL" id="AF111198">
    <property type="protein sequence ID" value="AAD30390.1"/>
    <property type="molecule type" value="Genomic_DNA"/>
</dbReference>
<dbReference type="EMBL" id="CR407660">
    <property type="protein sequence ID" value="CAG28588.1"/>
    <property type="molecule type" value="mRNA"/>
</dbReference>
<dbReference type="EMBL" id="AB451458">
    <property type="protein sequence ID" value="BAG70272.1"/>
    <property type="molecule type" value="mRNA"/>
</dbReference>
<dbReference type="EMBL" id="CH471147">
    <property type="protein sequence ID" value="EAW80102.1"/>
    <property type="molecule type" value="Genomic_DNA"/>
</dbReference>
<dbReference type="EMBL" id="BC069700">
    <property type="protein sequence ID" value="AAH69700.1"/>
    <property type="molecule type" value="mRNA"/>
</dbReference>
<dbReference type="EMBL" id="BC096124">
    <property type="protein sequence ID" value="AAH96124.1"/>
    <property type="molecule type" value="mRNA"/>
</dbReference>
<dbReference type="EMBL" id="BC096125">
    <property type="protein sequence ID" value="AAH96125.1"/>
    <property type="molecule type" value="mRNA"/>
</dbReference>
<dbReference type="EMBL" id="BC096126">
    <property type="protein sequence ID" value="AAH96126.1"/>
    <property type="molecule type" value="mRNA"/>
</dbReference>
<dbReference type="EMBL" id="BC096127">
    <property type="protein sequence ID" value="AAH96127.1"/>
    <property type="molecule type" value="mRNA"/>
</dbReference>
<dbReference type="CCDS" id="CCDS11306.1"/>
<dbReference type="RefSeq" id="NP_002979.1">
    <property type="nucleotide sequence ID" value="NM_002988.4"/>
</dbReference>
<dbReference type="PDB" id="4MHE">
    <property type="method" value="X-ray"/>
    <property type="resolution" value="2.10 A"/>
    <property type="chains" value="A/B/C/D=21-89"/>
</dbReference>
<dbReference type="PDBsum" id="4MHE"/>
<dbReference type="SMR" id="P55774"/>
<dbReference type="BioGRID" id="112265">
    <property type="interactions" value="47"/>
</dbReference>
<dbReference type="FunCoup" id="P55774">
    <property type="interactions" value="531"/>
</dbReference>
<dbReference type="IntAct" id="P55774">
    <property type="interactions" value="21"/>
</dbReference>
<dbReference type="STRING" id="9606.ENSP00000479955"/>
<dbReference type="BioMuta" id="CCL18"/>
<dbReference type="DMDM" id="2493666"/>
<dbReference type="MassIVE" id="P55774"/>
<dbReference type="PaxDb" id="9606-ENSP00000479955"/>
<dbReference type="PeptideAtlas" id="P55774"/>
<dbReference type="ProteomicsDB" id="56863"/>
<dbReference type="Antibodypedia" id="72699">
    <property type="antibodies" value="312 antibodies from 30 providers"/>
</dbReference>
<dbReference type="DNASU" id="6362"/>
<dbReference type="Ensembl" id="ENST00000614828.2">
    <property type="protein sequence ID" value="ENSP00000483144.1"/>
    <property type="gene ID" value="ENSG00000278167.2"/>
</dbReference>
<dbReference type="Ensembl" id="ENST00000615723.2">
    <property type="protein sequence ID" value="ENSP00000483347.1"/>
    <property type="gene ID" value="ENSG00000278006.2"/>
</dbReference>
<dbReference type="Ensembl" id="ENST00000616054.2">
    <property type="protein sequence ID" value="ENSP00000479955.1"/>
    <property type="gene ID" value="ENSG00000275385.2"/>
</dbReference>
<dbReference type="GeneID" id="6362"/>
<dbReference type="KEGG" id="hsa:6362"/>
<dbReference type="MANE-Select" id="ENST00000616054.2">
    <property type="protein sequence ID" value="ENSP00000479955.1"/>
    <property type="RefSeq nucleotide sequence ID" value="NM_002988.4"/>
    <property type="RefSeq protein sequence ID" value="NP_002979.1"/>
</dbReference>
<dbReference type="UCSC" id="uc002hku.4">
    <property type="organism name" value="human"/>
</dbReference>
<dbReference type="AGR" id="HGNC:10616"/>
<dbReference type="CTD" id="6362"/>
<dbReference type="DisGeNET" id="6362"/>
<dbReference type="GeneCards" id="CCL18"/>
<dbReference type="HGNC" id="HGNC:10616">
    <property type="gene designation" value="CCL18"/>
</dbReference>
<dbReference type="HPA" id="ENSG00000275385">
    <property type="expression patterns" value="Tissue enriched (lung)"/>
</dbReference>
<dbReference type="MIM" id="603757">
    <property type="type" value="gene"/>
</dbReference>
<dbReference type="neXtProt" id="NX_P55774"/>
<dbReference type="OpenTargets" id="ENSG00000275385"/>
<dbReference type="PharmGKB" id="PA35549"/>
<dbReference type="VEuPathDB" id="HostDB:ENSG00000275385"/>
<dbReference type="eggNOG" id="ENOG502S8M4">
    <property type="taxonomic scope" value="Eukaryota"/>
</dbReference>
<dbReference type="GeneTree" id="ENSGT01100000263482"/>
<dbReference type="HOGENOM" id="CLU_141716_4_2_1"/>
<dbReference type="InParanoid" id="P55774"/>
<dbReference type="OMA" id="TNKEFCC"/>
<dbReference type="OrthoDB" id="9447832at2759"/>
<dbReference type="PAN-GO" id="P55774">
    <property type="GO annotations" value="14 GO annotations based on evolutionary models"/>
</dbReference>
<dbReference type="PhylomeDB" id="P55774"/>
<dbReference type="TreeFam" id="TF334888"/>
<dbReference type="PathwayCommons" id="P55774"/>
<dbReference type="SignaLink" id="P55774"/>
<dbReference type="BioGRID-ORCS" id="6362">
    <property type="hits" value="11 hits in 1139 CRISPR screens"/>
</dbReference>
<dbReference type="EvolutionaryTrace" id="P55774"/>
<dbReference type="GenomeRNAi" id="6362"/>
<dbReference type="Pharos" id="P55774">
    <property type="development level" value="Tbio"/>
</dbReference>
<dbReference type="PRO" id="PR:P55774"/>
<dbReference type="Proteomes" id="UP000005640">
    <property type="component" value="Chromosome 17"/>
</dbReference>
<dbReference type="RNAct" id="P55774">
    <property type="molecule type" value="protein"/>
</dbReference>
<dbReference type="Bgee" id="ENSG00000275385">
    <property type="expression patterns" value="Expressed in lymph node and 89 other cell types or tissues"/>
</dbReference>
<dbReference type="GO" id="GO:0005615">
    <property type="term" value="C:extracellular space"/>
    <property type="evidence" value="ECO:0000318"/>
    <property type="project" value="GO_Central"/>
</dbReference>
<dbReference type="GO" id="GO:0048020">
    <property type="term" value="F:CCR chemokine receptor binding"/>
    <property type="evidence" value="ECO:0000318"/>
    <property type="project" value="GO_Central"/>
</dbReference>
<dbReference type="GO" id="GO:0008009">
    <property type="term" value="F:chemokine activity"/>
    <property type="evidence" value="ECO:0000318"/>
    <property type="project" value="GO_Central"/>
</dbReference>
<dbReference type="GO" id="GO:0061844">
    <property type="term" value="P:antimicrobial humoral immune response mediated by antimicrobial peptide"/>
    <property type="evidence" value="ECO:0000318"/>
    <property type="project" value="GO_Central"/>
</dbReference>
<dbReference type="GO" id="GO:0060326">
    <property type="term" value="P:cell chemotaxis"/>
    <property type="evidence" value="ECO:0000318"/>
    <property type="project" value="GO_Central"/>
</dbReference>
<dbReference type="GO" id="GO:0007154">
    <property type="term" value="P:cell communication"/>
    <property type="evidence" value="ECO:0000304"/>
    <property type="project" value="ProtInc"/>
</dbReference>
<dbReference type="GO" id="GO:0007267">
    <property type="term" value="P:cell-cell signaling"/>
    <property type="evidence" value="ECO:0000304"/>
    <property type="project" value="ProtInc"/>
</dbReference>
<dbReference type="GO" id="GO:0070098">
    <property type="term" value="P:chemokine-mediated signaling pathway"/>
    <property type="evidence" value="ECO:0000318"/>
    <property type="project" value="GO_Central"/>
</dbReference>
<dbReference type="GO" id="GO:0006935">
    <property type="term" value="P:chemotaxis"/>
    <property type="evidence" value="ECO:0000304"/>
    <property type="project" value="ProtInc"/>
</dbReference>
<dbReference type="GO" id="GO:0006955">
    <property type="term" value="P:immune response"/>
    <property type="evidence" value="ECO:0000304"/>
    <property type="project" value="ProtInc"/>
</dbReference>
<dbReference type="GO" id="GO:0006954">
    <property type="term" value="P:inflammatory response"/>
    <property type="evidence" value="ECO:0000318"/>
    <property type="project" value="GO_Central"/>
</dbReference>
<dbReference type="GO" id="GO:0030335">
    <property type="term" value="P:positive regulation of cell migration"/>
    <property type="evidence" value="ECO:0000318"/>
    <property type="project" value="GO_Central"/>
</dbReference>
<dbReference type="GO" id="GO:0007165">
    <property type="term" value="P:signal transduction"/>
    <property type="evidence" value="ECO:0000304"/>
    <property type="project" value="ProtInc"/>
</dbReference>
<dbReference type="CDD" id="cd00272">
    <property type="entry name" value="Chemokine_CC"/>
    <property type="match status" value="1"/>
</dbReference>
<dbReference type="FunFam" id="2.40.50.40:FF:000002">
    <property type="entry name" value="C-C motif chemokine"/>
    <property type="match status" value="1"/>
</dbReference>
<dbReference type="Gene3D" id="2.40.50.40">
    <property type="match status" value="1"/>
</dbReference>
<dbReference type="InterPro" id="IPR039809">
    <property type="entry name" value="Chemokine_b/g/d"/>
</dbReference>
<dbReference type="InterPro" id="IPR000827">
    <property type="entry name" value="Chemokine_CC_CS"/>
</dbReference>
<dbReference type="InterPro" id="IPR001811">
    <property type="entry name" value="Chemokine_IL8-like_dom"/>
</dbReference>
<dbReference type="InterPro" id="IPR036048">
    <property type="entry name" value="Interleukin_8-like_sf"/>
</dbReference>
<dbReference type="PANTHER" id="PTHR12015:SF94">
    <property type="entry name" value="C-C MOTIF CHEMOKINE 18"/>
    <property type="match status" value="1"/>
</dbReference>
<dbReference type="PANTHER" id="PTHR12015">
    <property type="entry name" value="SMALL INDUCIBLE CYTOKINE A"/>
    <property type="match status" value="1"/>
</dbReference>
<dbReference type="Pfam" id="PF00048">
    <property type="entry name" value="IL8"/>
    <property type="match status" value="1"/>
</dbReference>
<dbReference type="PRINTS" id="PR00436">
    <property type="entry name" value="INTERLEUKIN8"/>
</dbReference>
<dbReference type="SMART" id="SM00199">
    <property type="entry name" value="SCY"/>
    <property type="match status" value="1"/>
</dbReference>
<dbReference type="SUPFAM" id="SSF54117">
    <property type="entry name" value="Interleukin 8-like chemokines"/>
    <property type="match status" value="1"/>
</dbReference>
<dbReference type="PROSITE" id="PS00472">
    <property type="entry name" value="SMALL_CYTOKINES_CC"/>
    <property type="match status" value="1"/>
</dbReference>
<gene>
    <name type="primary">CCL18</name>
    <name type="synonym">AMAC1</name>
    <name type="synonym">DCCK1</name>
    <name type="synonym">MIP4</name>
    <name type="synonym">PARC</name>
    <name type="synonym">SCYA18</name>
</gene>
<evidence type="ECO:0000269" key="1">
    <source>
    </source>
</evidence>
<evidence type="ECO:0000269" key="2">
    <source>
    </source>
</evidence>
<evidence type="ECO:0000269" key="3">
    <source>
    </source>
</evidence>
<evidence type="ECO:0000269" key="4">
    <source>
    </source>
</evidence>
<evidence type="ECO:0000305" key="5"/>
<evidence type="ECO:0007829" key="6">
    <source>
        <dbReference type="PDB" id="4MHE"/>
    </source>
</evidence>
<protein>
    <recommendedName>
        <fullName>C-C motif chemokine 18</fullName>
    </recommendedName>
    <alternativeName>
        <fullName>Alternative macrophage activation-associated CC chemokine 1</fullName>
        <shortName>AMAC-1</shortName>
    </alternativeName>
    <alternativeName>
        <fullName>CC chemokine PARC</fullName>
    </alternativeName>
    <alternativeName>
        <fullName>Dendritic cell chemokine 1</fullName>
        <shortName>DC-CK1</shortName>
    </alternativeName>
    <alternativeName>
        <fullName>Macrophage inflammatory protein 4</fullName>
        <shortName>MIP-4</shortName>
    </alternativeName>
    <alternativeName>
        <fullName>Pulmonary and activation-regulated chemokine</fullName>
    </alternativeName>
    <alternativeName>
        <fullName>Small-inducible cytokine A18</fullName>
    </alternativeName>
    <component>
        <recommendedName>
            <fullName>CCL18(1-68)</fullName>
        </recommendedName>
    </component>
    <component>
        <recommendedName>
            <fullName>CCL18(3-69)</fullName>
        </recommendedName>
    </component>
    <component>
        <recommendedName>
            <fullName>CCL18(4-69)</fullName>
        </recommendedName>
    </component>
</protein>
<organism>
    <name type="scientific">Homo sapiens</name>
    <name type="common">Human</name>
    <dbReference type="NCBI Taxonomy" id="9606"/>
    <lineage>
        <taxon>Eukaryota</taxon>
        <taxon>Metazoa</taxon>
        <taxon>Chordata</taxon>
        <taxon>Craniata</taxon>
        <taxon>Vertebrata</taxon>
        <taxon>Euteleostomi</taxon>
        <taxon>Mammalia</taxon>
        <taxon>Eutheria</taxon>
        <taxon>Euarchontoglires</taxon>
        <taxon>Primates</taxon>
        <taxon>Haplorrhini</taxon>
        <taxon>Catarrhini</taxon>
        <taxon>Hominidae</taxon>
        <taxon>Homo</taxon>
    </lineage>
</organism>
<feature type="signal peptide" evidence="4">
    <location>
        <begin position="1"/>
        <end position="20"/>
    </location>
</feature>
<feature type="chain" id="PRO_0000005212" description="C-C motif chemokine 18">
    <location>
        <begin position="21"/>
        <end position="89"/>
    </location>
</feature>
<feature type="chain" id="PRO_0000041851" description="CCL18(1-68)">
    <location>
        <begin position="21"/>
        <end position="88"/>
    </location>
</feature>
<feature type="chain" id="PRO_0000041852" description="CCL18(3-69)">
    <location>
        <begin position="23"/>
        <end position="89"/>
    </location>
</feature>
<feature type="chain" id="PRO_0000041853" description="CCL18(4-69)">
    <location>
        <begin position="24"/>
        <end position="89"/>
    </location>
</feature>
<feature type="disulfide bond" evidence="3">
    <location>
        <begin position="30"/>
        <end position="54"/>
    </location>
</feature>
<feature type="disulfide bond" evidence="3">
    <location>
        <begin position="31"/>
        <end position="70"/>
    </location>
</feature>
<feature type="strand" evidence="6">
    <location>
        <begin position="22"/>
        <end position="25"/>
    </location>
</feature>
<feature type="helix" evidence="6">
    <location>
        <begin position="26"/>
        <end position="29"/>
    </location>
</feature>
<feature type="helix" evidence="6">
    <location>
        <begin position="41"/>
        <end position="43"/>
    </location>
</feature>
<feature type="strand" evidence="6">
    <location>
        <begin position="44"/>
        <end position="49"/>
    </location>
</feature>
<feature type="strand" evidence="6">
    <location>
        <begin position="59"/>
        <end position="63"/>
    </location>
</feature>
<feature type="strand" evidence="6">
    <location>
        <begin position="68"/>
        <end position="71"/>
    </location>
</feature>
<feature type="helix" evidence="6">
    <location>
        <begin position="76"/>
        <end position="86"/>
    </location>
</feature>